<keyword id="KW-0378">Hydrolase</keyword>
<keyword id="KW-0460">Magnesium</keyword>
<keyword id="KW-0479">Metal-binding</keyword>
<keyword id="KW-0540">Nuclease</keyword>
<keyword id="KW-1185">Reference proteome</keyword>
<keyword id="KW-1277">Toxin-antitoxin system</keyword>
<evidence type="ECO:0000255" key="1">
    <source>
        <dbReference type="HAMAP-Rule" id="MF_00265"/>
    </source>
</evidence>
<evidence type="ECO:0000269" key="2">
    <source>
    </source>
</evidence>
<gene>
    <name evidence="1" type="primary">vapC25</name>
    <name type="ordered locus">Rv0277c</name>
</gene>
<comment type="function">
    <text evidence="1 2">Toxic component of a type II toxin-antitoxin (TA) system. An RNase (By similarity). Upon expression in M.smegmatis inhibits colony formation. Its toxic effect is neutralized by coexpression with cognate antitoxin VapB25.</text>
</comment>
<comment type="cofactor">
    <cofactor evidence="1">
        <name>Mg(2+)</name>
        <dbReference type="ChEBI" id="CHEBI:18420"/>
    </cofactor>
</comment>
<comment type="similarity">
    <text evidence="1">Belongs to the PINc/VapC protein family.</text>
</comment>
<organism>
    <name type="scientific">Mycobacterium tuberculosis (strain ATCC 25618 / H37Rv)</name>
    <dbReference type="NCBI Taxonomy" id="83332"/>
    <lineage>
        <taxon>Bacteria</taxon>
        <taxon>Bacillati</taxon>
        <taxon>Actinomycetota</taxon>
        <taxon>Actinomycetes</taxon>
        <taxon>Mycobacteriales</taxon>
        <taxon>Mycobacteriaceae</taxon>
        <taxon>Mycobacterium</taxon>
        <taxon>Mycobacterium tuberculosis complex</taxon>
    </lineage>
</organism>
<reference key="1">
    <citation type="journal article" date="1998" name="Nature">
        <title>Deciphering the biology of Mycobacterium tuberculosis from the complete genome sequence.</title>
        <authorList>
            <person name="Cole S.T."/>
            <person name="Brosch R."/>
            <person name="Parkhill J."/>
            <person name="Garnier T."/>
            <person name="Churcher C.M."/>
            <person name="Harris D.E."/>
            <person name="Gordon S.V."/>
            <person name="Eiglmeier K."/>
            <person name="Gas S."/>
            <person name="Barry C.E. III"/>
            <person name="Tekaia F."/>
            <person name="Badcock K."/>
            <person name="Basham D."/>
            <person name="Brown D."/>
            <person name="Chillingworth T."/>
            <person name="Connor R."/>
            <person name="Davies R.M."/>
            <person name="Devlin K."/>
            <person name="Feltwell T."/>
            <person name="Gentles S."/>
            <person name="Hamlin N."/>
            <person name="Holroyd S."/>
            <person name="Hornsby T."/>
            <person name="Jagels K."/>
            <person name="Krogh A."/>
            <person name="McLean J."/>
            <person name="Moule S."/>
            <person name="Murphy L.D."/>
            <person name="Oliver S."/>
            <person name="Osborne J."/>
            <person name="Quail M.A."/>
            <person name="Rajandream M.A."/>
            <person name="Rogers J."/>
            <person name="Rutter S."/>
            <person name="Seeger K."/>
            <person name="Skelton S."/>
            <person name="Squares S."/>
            <person name="Squares R."/>
            <person name="Sulston J.E."/>
            <person name="Taylor K."/>
            <person name="Whitehead S."/>
            <person name="Barrell B.G."/>
        </authorList>
    </citation>
    <scope>NUCLEOTIDE SEQUENCE [LARGE SCALE GENOMIC DNA]</scope>
    <source>
        <strain>ATCC 25618 / H37Rv</strain>
    </source>
</reference>
<reference key="2">
    <citation type="journal article" date="2009" name="PLoS Genet.">
        <title>Comprehensive functional analysis of Mycobacterium tuberculosis toxin-antitoxin systems: implications for pathogenesis, stress responses, and evolution.</title>
        <authorList>
            <person name="Ramage H.R."/>
            <person name="Connolly L.E."/>
            <person name="Cox J.S."/>
        </authorList>
    </citation>
    <scope>EXPRESSION IN M.SMEGMATIS</scope>
    <scope>FUNCTION AS A TOXIN</scope>
    <source>
        <strain>ATCC 35801 / TMC 107 / Erdman</strain>
    </source>
</reference>
<dbReference type="EC" id="3.1.-.-" evidence="1"/>
<dbReference type="EMBL" id="AL123456">
    <property type="protein sequence ID" value="CCP43006.1"/>
    <property type="molecule type" value="Genomic_DNA"/>
</dbReference>
<dbReference type="PIR" id="C70835">
    <property type="entry name" value="C70835"/>
</dbReference>
<dbReference type="RefSeq" id="NP_214791.1">
    <property type="nucleotide sequence ID" value="NC_000962.3"/>
</dbReference>
<dbReference type="RefSeq" id="WP_003401406.1">
    <property type="nucleotide sequence ID" value="NZ_NVQJ01000055.1"/>
</dbReference>
<dbReference type="SMR" id="P9WF85"/>
<dbReference type="STRING" id="83332.Rv0277c"/>
<dbReference type="PaxDb" id="83332-Rv0277c"/>
<dbReference type="DNASU" id="886625"/>
<dbReference type="GeneID" id="886625"/>
<dbReference type="KEGG" id="mtu:Rv0277c"/>
<dbReference type="KEGG" id="mtv:RVBD_0277c"/>
<dbReference type="TubercuList" id="Rv0277c"/>
<dbReference type="eggNOG" id="COG1848">
    <property type="taxonomic scope" value="Bacteria"/>
</dbReference>
<dbReference type="InParanoid" id="P9WF85"/>
<dbReference type="OrthoDB" id="556169at2"/>
<dbReference type="PhylomeDB" id="P9WF85"/>
<dbReference type="Proteomes" id="UP000001584">
    <property type="component" value="Chromosome"/>
</dbReference>
<dbReference type="GO" id="GO:0000287">
    <property type="term" value="F:magnesium ion binding"/>
    <property type="evidence" value="ECO:0007669"/>
    <property type="project" value="UniProtKB-UniRule"/>
</dbReference>
<dbReference type="GO" id="GO:0004540">
    <property type="term" value="F:RNA nuclease activity"/>
    <property type="evidence" value="ECO:0007669"/>
    <property type="project" value="InterPro"/>
</dbReference>
<dbReference type="GO" id="GO:0045926">
    <property type="term" value="P:negative regulation of growth"/>
    <property type="evidence" value="ECO:0000315"/>
    <property type="project" value="MTBBASE"/>
</dbReference>
<dbReference type="CDD" id="cd18678">
    <property type="entry name" value="PIN_MtVapC25_VapC33-like"/>
    <property type="match status" value="1"/>
</dbReference>
<dbReference type="FunFam" id="3.40.50.1010:FF:000048">
    <property type="entry name" value="Ribonuclease VapC"/>
    <property type="match status" value="1"/>
</dbReference>
<dbReference type="Gene3D" id="3.40.50.1010">
    <property type="entry name" value="5'-nuclease"/>
    <property type="match status" value="1"/>
</dbReference>
<dbReference type="HAMAP" id="MF_00265">
    <property type="entry name" value="VapC_Nob1"/>
    <property type="match status" value="1"/>
</dbReference>
<dbReference type="InterPro" id="IPR006226">
    <property type="entry name" value="Mtu_PIN"/>
</dbReference>
<dbReference type="InterPro" id="IPR029060">
    <property type="entry name" value="PIN-like_dom_sf"/>
</dbReference>
<dbReference type="InterPro" id="IPR002716">
    <property type="entry name" value="PIN_dom"/>
</dbReference>
<dbReference type="InterPro" id="IPR022907">
    <property type="entry name" value="VapC_family"/>
</dbReference>
<dbReference type="NCBIfam" id="TIGR00028">
    <property type="entry name" value="Mtu_PIN_fam"/>
    <property type="match status" value="1"/>
</dbReference>
<dbReference type="Pfam" id="PF01850">
    <property type="entry name" value="PIN"/>
    <property type="match status" value="1"/>
</dbReference>
<dbReference type="SUPFAM" id="SSF88723">
    <property type="entry name" value="PIN domain-like"/>
    <property type="match status" value="1"/>
</dbReference>
<proteinExistence type="evidence at protein level"/>
<name>VPC25_MYCTU</name>
<feature type="chain" id="PRO_0000407884" description="Ribonuclease VapC25">
    <location>
        <begin position="1"/>
        <end position="142"/>
    </location>
</feature>
<feature type="domain" description="PINc" evidence="1">
    <location>
        <begin position="3"/>
        <end position="139"/>
    </location>
</feature>
<feature type="binding site" evidence="1">
    <location>
        <position position="5"/>
    </location>
    <ligand>
        <name>Mg(2+)</name>
        <dbReference type="ChEBI" id="CHEBI:18420"/>
    </ligand>
</feature>
<feature type="binding site" evidence="1">
    <location>
        <position position="108"/>
    </location>
    <ligand>
        <name>Mg(2+)</name>
        <dbReference type="ChEBI" id="CHEBI:18420"/>
    </ligand>
</feature>
<accession>P9WF85</accession>
<accession>L0T672</accession>
<accession>O53683</accession>
<accession>Q7DA40</accession>
<sequence>MFLIDVNVLLAAHRGDHPNHRTVRPWFDRLLAADDPFTVPNLVWASFLRLTTNRRIFEIPSPRADAFAFVEAVNAQPHHLPTSPGPRHLVLLRKLCDEADASGDLIPDAVLGAIAVEHHCAVVSLDRDFARFASVRHIRPPI</sequence>
<protein>
    <recommendedName>
        <fullName evidence="1">Ribonuclease VapC25</fullName>
        <shortName evidence="1">RNase VapC25</shortName>
        <ecNumber evidence="1">3.1.-.-</ecNumber>
    </recommendedName>
    <alternativeName>
        <fullName evidence="1">Toxin VapC25</fullName>
    </alternativeName>
</protein>